<comment type="function">
    <text evidence="1">Involved in peptide bond synthesis. Stimulates efficient translation and peptide-bond synthesis on native or reconstituted 70S ribosomes in vitro. Probably functions indirectly by altering the affinity of the ribosome for aminoacyl-tRNA, thus increasing their reactivity as acceptors for peptidyl transferase.</text>
</comment>
<comment type="pathway">
    <text evidence="1">Protein biosynthesis; polypeptide chain elongation.</text>
</comment>
<comment type="subcellular location">
    <subcellularLocation>
        <location evidence="1">Cytoplasm</location>
    </subcellularLocation>
</comment>
<comment type="similarity">
    <text evidence="1">Belongs to the elongation factor P family.</text>
</comment>
<feature type="chain" id="PRO_0000094289" description="Elongation factor P">
    <location>
        <begin position="1"/>
        <end position="188"/>
    </location>
</feature>
<dbReference type="EMBL" id="BA000026">
    <property type="protein sequence ID" value="BAC43949.1"/>
    <property type="molecule type" value="Genomic_DNA"/>
</dbReference>
<dbReference type="RefSeq" id="WP_011076985.1">
    <property type="nucleotide sequence ID" value="NC_004432.1"/>
</dbReference>
<dbReference type="SMR" id="Q8EWP5"/>
<dbReference type="FunCoup" id="Q8EWP5">
    <property type="interactions" value="246"/>
</dbReference>
<dbReference type="STRING" id="272633.gene:10731257"/>
<dbReference type="KEGG" id="mpe:MYPE1580"/>
<dbReference type="eggNOG" id="COG0231">
    <property type="taxonomic scope" value="Bacteria"/>
</dbReference>
<dbReference type="HOGENOM" id="CLU_074944_2_1_14"/>
<dbReference type="InParanoid" id="Q8EWP5"/>
<dbReference type="UniPathway" id="UPA00345"/>
<dbReference type="Proteomes" id="UP000002522">
    <property type="component" value="Chromosome"/>
</dbReference>
<dbReference type="GO" id="GO:0005737">
    <property type="term" value="C:cytoplasm"/>
    <property type="evidence" value="ECO:0007669"/>
    <property type="project" value="UniProtKB-SubCell"/>
</dbReference>
<dbReference type="GO" id="GO:0003746">
    <property type="term" value="F:translation elongation factor activity"/>
    <property type="evidence" value="ECO:0007669"/>
    <property type="project" value="UniProtKB-UniRule"/>
</dbReference>
<dbReference type="GO" id="GO:0043043">
    <property type="term" value="P:peptide biosynthetic process"/>
    <property type="evidence" value="ECO:0007669"/>
    <property type="project" value="InterPro"/>
</dbReference>
<dbReference type="CDD" id="cd04470">
    <property type="entry name" value="S1_EF-P_repeat_1"/>
    <property type="match status" value="1"/>
</dbReference>
<dbReference type="CDD" id="cd05794">
    <property type="entry name" value="S1_EF-P_repeat_2"/>
    <property type="match status" value="1"/>
</dbReference>
<dbReference type="FunFam" id="2.40.50.140:FF:000004">
    <property type="entry name" value="Elongation factor P"/>
    <property type="match status" value="1"/>
</dbReference>
<dbReference type="FunFam" id="2.40.50.140:FF:000009">
    <property type="entry name" value="Elongation factor P"/>
    <property type="match status" value="1"/>
</dbReference>
<dbReference type="Gene3D" id="2.30.30.30">
    <property type="match status" value="1"/>
</dbReference>
<dbReference type="Gene3D" id="2.40.50.140">
    <property type="entry name" value="Nucleic acid-binding proteins"/>
    <property type="match status" value="2"/>
</dbReference>
<dbReference type="HAMAP" id="MF_00141">
    <property type="entry name" value="EF_P"/>
    <property type="match status" value="1"/>
</dbReference>
<dbReference type="InterPro" id="IPR015365">
    <property type="entry name" value="Elong-fact-P_C"/>
</dbReference>
<dbReference type="InterPro" id="IPR012340">
    <property type="entry name" value="NA-bd_OB-fold"/>
</dbReference>
<dbReference type="InterPro" id="IPR014722">
    <property type="entry name" value="Rib_uL2_dom2"/>
</dbReference>
<dbReference type="InterPro" id="IPR020599">
    <property type="entry name" value="Transl_elong_fac_P/YeiP"/>
</dbReference>
<dbReference type="InterPro" id="IPR013185">
    <property type="entry name" value="Transl_elong_KOW-like"/>
</dbReference>
<dbReference type="InterPro" id="IPR001059">
    <property type="entry name" value="Transl_elong_P/YeiP_cen"/>
</dbReference>
<dbReference type="InterPro" id="IPR013852">
    <property type="entry name" value="Transl_elong_P/YeiP_CS"/>
</dbReference>
<dbReference type="InterPro" id="IPR011768">
    <property type="entry name" value="Transl_elongation_fac_P"/>
</dbReference>
<dbReference type="InterPro" id="IPR008991">
    <property type="entry name" value="Translation_prot_SH3-like_sf"/>
</dbReference>
<dbReference type="NCBIfam" id="TIGR00038">
    <property type="entry name" value="efp"/>
    <property type="match status" value="1"/>
</dbReference>
<dbReference type="NCBIfam" id="NF001810">
    <property type="entry name" value="PRK00529.1"/>
    <property type="match status" value="1"/>
</dbReference>
<dbReference type="PANTHER" id="PTHR30053">
    <property type="entry name" value="ELONGATION FACTOR P"/>
    <property type="match status" value="1"/>
</dbReference>
<dbReference type="PANTHER" id="PTHR30053:SF12">
    <property type="entry name" value="ELONGATION FACTOR P (EF-P) FAMILY PROTEIN"/>
    <property type="match status" value="1"/>
</dbReference>
<dbReference type="Pfam" id="PF01132">
    <property type="entry name" value="EFP"/>
    <property type="match status" value="1"/>
</dbReference>
<dbReference type="Pfam" id="PF08207">
    <property type="entry name" value="EFP_N"/>
    <property type="match status" value="1"/>
</dbReference>
<dbReference type="Pfam" id="PF09285">
    <property type="entry name" value="Elong-fact-P_C"/>
    <property type="match status" value="1"/>
</dbReference>
<dbReference type="PIRSF" id="PIRSF005901">
    <property type="entry name" value="EF-P"/>
    <property type="match status" value="1"/>
</dbReference>
<dbReference type="SMART" id="SM01185">
    <property type="entry name" value="EFP"/>
    <property type="match status" value="1"/>
</dbReference>
<dbReference type="SMART" id="SM00841">
    <property type="entry name" value="Elong-fact-P_C"/>
    <property type="match status" value="1"/>
</dbReference>
<dbReference type="SUPFAM" id="SSF50249">
    <property type="entry name" value="Nucleic acid-binding proteins"/>
    <property type="match status" value="2"/>
</dbReference>
<dbReference type="SUPFAM" id="SSF50104">
    <property type="entry name" value="Translation proteins SH3-like domain"/>
    <property type="match status" value="1"/>
</dbReference>
<dbReference type="PROSITE" id="PS01275">
    <property type="entry name" value="EFP"/>
    <property type="match status" value="1"/>
</dbReference>
<name>EFP_MALP2</name>
<protein>
    <recommendedName>
        <fullName evidence="1">Elongation factor P</fullName>
        <shortName evidence="1">EF-P</shortName>
    </recommendedName>
</protein>
<proteinExistence type="inferred from homology"/>
<reference key="1">
    <citation type="journal article" date="2002" name="Nucleic Acids Res.">
        <title>The complete genomic sequence of Mycoplasma penetrans, an intracellular bacterial pathogen in humans.</title>
        <authorList>
            <person name="Sasaki Y."/>
            <person name="Ishikawa J."/>
            <person name="Yamashita A."/>
            <person name="Oshima K."/>
            <person name="Kenri T."/>
            <person name="Furuya K."/>
            <person name="Yoshino C."/>
            <person name="Horino A."/>
            <person name="Shiba T."/>
            <person name="Sasaki T."/>
            <person name="Hattori M."/>
        </authorList>
    </citation>
    <scope>NUCLEOTIDE SEQUENCE [LARGE SCALE GENOMIC DNA]</scope>
    <source>
        <strain>HF-2</strain>
    </source>
</reference>
<sequence>MSQIIHAKDLRPGNTFIYKNNLYLVIENSFNKTAMREGIVKCKVKNLRTSSITVEVLTGEKLERAIIDKVKAMYSYADKNTLVFMDGESFEQIEIDANKLKWEKNFIVDGSEVSILKYGEEVLNVSLPDQVSLLVDFAEEAVQGNTVQTAMKKARLETGLEIEVPQFIKTGEKIIVNTVDGKYVGRDK</sequence>
<evidence type="ECO:0000255" key="1">
    <source>
        <dbReference type="HAMAP-Rule" id="MF_00141"/>
    </source>
</evidence>
<gene>
    <name evidence="1" type="primary">efp</name>
    <name type="ordered locus">MYPE1580</name>
</gene>
<accession>Q8EWP5</accession>
<keyword id="KW-0963">Cytoplasm</keyword>
<keyword id="KW-0251">Elongation factor</keyword>
<keyword id="KW-0648">Protein biosynthesis</keyword>
<keyword id="KW-1185">Reference proteome</keyword>
<organism>
    <name type="scientific">Malacoplasma penetrans (strain HF-2)</name>
    <name type="common">Mycoplasma penetrans</name>
    <dbReference type="NCBI Taxonomy" id="272633"/>
    <lineage>
        <taxon>Bacteria</taxon>
        <taxon>Bacillati</taxon>
        <taxon>Mycoplasmatota</taxon>
        <taxon>Mycoplasmoidales</taxon>
        <taxon>Mycoplasmoidaceae</taxon>
        <taxon>Malacoplasma</taxon>
    </lineage>
</organism>